<feature type="chain" id="PRO_1000211963" description="Small ribosomal subunit protein eS24">
    <location>
        <begin position="1"/>
        <end position="120"/>
    </location>
</feature>
<feature type="region of interest" description="Disordered" evidence="2">
    <location>
        <begin position="101"/>
        <end position="120"/>
    </location>
</feature>
<organism>
    <name type="scientific">Saccharolobus islandicus (strain Y.N.15.51 / Yellowstone #2)</name>
    <name type="common">Sulfolobus islandicus</name>
    <dbReference type="NCBI Taxonomy" id="419942"/>
    <lineage>
        <taxon>Archaea</taxon>
        <taxon>Thermoproteota</taxon>
        <taxon>Thermoprotei</taxon>
        <taxon>Sulfolobales</taxon>
        <taxon>Sulfolobaceae</taxon>
        <taxon>Saccharolobus</taxon>
    </lineage>
</organism>
<sequence length="120" mass="13125">MESQAKVKISDKAEGIIERDVQNAVIGRREISLKVYHMGSGTPSRKDIIKAIIQAFASQENLVVVRKISTSYGAGISNIKLHIYKSREILEKIEPKYLLDRDAGTKQKKGGSKGGQGAKG</sequence>
<keyword id="KW-0687">Ribonucleoprotein</keyword>
<keyword id="KW-0689">Ribosomal protein</keyword>
<dbReference type="EMBL" id="CP001404">
    <property type="protein sequence ID" value="ACP48245.1"/>
    <property type="molecule type" value="Genomic_DNA"/>
</dbReference>
<dbReference type="RefSeq" id="WP_012713901.1">
    <property type="nucleotide sequence ID" value="NC_012623.1"/>
</dbReference>
<dbReference type="SMR" id="C3NGI5"/>
<dbReference type="GeneID" id="7809999"/>
<dbReference type="KEGG" id="sin:YN1551_1139"/>
<dbReference type="HOGENOM" id="CLU_107248_3_2_2"/>
<dbReference type="Proteomes" id="UP000006818">
    <property type="component" value="Chromosome"/>
</dbReference>
<dbReference type="GO" id="GO:1990904">
    <property type="term" value="C:ribonucleoprotein complex"/>
    <property type="evidence" value="ECO:0007669"/>
    <property type="project" value="UniProtKB-KW"/>
</dbReference>
<dbReference type="GO" id="GO:0005840">
    <property type="term" value="C:ribosome"/>
    <property type="evidence" value="ECO:0007669"/>
    <property type="project" value="UniProtKB-KW"/>
</dbReference>
<dbReference type="GO" id="GO:0003735">
    <property type="term" value="F:structural constituent of ribosome"/>
    <property type="evidence" value="ECO:0007669"/>
    <property type="project" value="InterPro"/>
</dbReference>
<dbReference type="GO" id="GO:0006412">
    <property type="term" value="P:translation"/>
    <property type="evidence" value="ECO:0007669"/>
    <property type="project" value="UniProtKB-UniRule"/>
</dbReference>
<dbReference type="Gene3D" id="3.30.70.3370">
    <property type="match status" value="1"/>
</dbReference>
<dbReference type="HAMAP" id="MF_00545">
    <property type="entry name" value="Ribosomal_eS24"/>
    <property type="match status" value="1"/>
</dbReference>
<dbReference type="InterPro" id="IPR053709">
    <property type="entry name" value="eRP_eS24_sf"/>
</dbReference>
<dbReference type="InterPro" id="IPR001976">
    <property type="entry name" value="Ribosomal_eS24"/>
</dbReference>
<dbReference type="InterPro" id="IPR018098">
    <property type="entry name" value="Ribosomal_eS24_CS"/>
</dbReference>
<dbReference type="InterPro" id="IPR012678">
    <property type="entry name" value="Ribosomal_uL23/eL15/eS24_sf"/>
</dbReference>
<dbReference type="PANTHER" id="PTHR10496">
    <property type="entry name" value="40S RIBOSOMAL PROTEIN S24"/>
    <property type="match status" value="1"/>
</dbReference>
<dbReference type="Pfam" id="PF01282">
    <property type="entry name" value="Ribosomal_S24e"/>
    <property type="match status" value="1"/>
</dbReference>
<dbReference type="SUPFAM" id="SSF54189">
    <property type="entry name" value="Ribosomal proteins S24e, L23 and L15e"/>
    <property type="match status" value="1"/>
</dbReference>
<dbReference type="PROSITE" id="PS00529">
    <property type="entry name" value="RIBOSOMAL_S24E"/>
    <property type="match status" value="1"/>
</dbReference>
<proteinExistence type="inferred from homology"/>
<reference key="1">
    <citation type="journal article" date="2009" name="Proc. Natl. Acad. Sci. U.S.A.">
        <title>Biogeography of the Sulfolobus islandicus pan-genome.</title>
        <authorList>
            <person name="Reno M.L."/>
            <person name="Held N.L."/>
            <person name="Fields C.J."/>
            <person name="Burke P.V."/>
            <person name="Whitaker R.J."/>
        </authorList>
    </citation>
    <scope>NUCLEOTIDE SEQUENCE [LARGE SCALE GENOMIC DNA]</scope>
    <source>
        <strain>Y.N.15.51 / Yellowstone #2</strain>
    </source>
</reference>
<gene>
    <name evidence="1" type="primary">rps24e</name>
    <name type="ordered locus">YN1551_1139</name>
</gene>
<protein>
    <recommendedName>
        <fullName evidence="1">Small ribosomal subunit protein eS24</fullName>
    </recommendedName>
    <alternativeName>
        <fullName evidence="3">30S ribosomal protein S24e</fullName>
    </alternativeName>
</protein>
<accession>C3NGI5</accession>
<comment type="similarity">
    <text evidence="1">Belongs to the eukaryotic ribosomal protein eS24 family.</text>
</comment>
<name>RS24_SACI1</name>
<evidence type="ECO:0000255" key="1">
    <source>
        <dbReference type="HAMAP-Rule" id="MF_00545"/>
    </source>
</evidence>
<evidence type="ECO:0000256" key="2">
    <source>
        <dbReference type="SAM" id="MobiDB-lite"/>
    </source>
</evidence>
<evidence type="ECO:0000305" key="3"/>